<accession>Q9ZJU8</accession>
<reference key="1">
    <citation type="journal article" date="1999" name="Nature">
        <title>Genomic sequence comparison of two unrelated isolates of the human gastric pathogen Helicobacter pylori.</title>
        <authorList>
            <person name="Alm R.A."/>
            <person name="Ling L.-S.L."/>
            <person name="Moir D.T."/>
            <person name="King B.L."/>
            <person name="Brown E.D."/>
            <person name="Doig P.C."/>
            <person name="Smith D.R."/>
            <person name="Noonan B."/>
            <person name="Guild B.C."/>
            <person name="deJonge B.L."/>
            <person name="Carmel G."/>
            <person name="Tummino P.J."/>
            <person name="Caruso A."/>
            <person name="Uria-Nickelsen M."/>
            <person name="Mills D.M."/>
            <person name="Ives C."/>
            <person name="Gibson R."/>
            <person name="Merberg D."/>
            <person name="Mills S.D."/>
            <person name="Jiang Q."/>
            <person name="Taylor D.E."/>
            <person name="Vovis G.F."/>
            <person name="Trust T.J."/>
        </authorList>
    </citation>
    <scope>NUCLEOTIDE SEQUENCE [LARGE SCALE GENOMIC DNA]</scope>
    <source>
        <strain>J99 / ATCC 700824</strain>
    </source>
</reference>
<proteinExistence type="inferred from homology"/>
<evidence type="ECO:0000250" key="1"/>
<evidence type="ECO:0000305" key="2"/>
<name>TRPC_HELPJ</name>
<gene>
    <name type="primary">trpC</name>
    <name type="ordered locus">jhp_1200</name>
</gene>
<protein>
    <recommendedName>
        <fullName>Tryptophan biosynthesis protein TrpCF</fullName>
    </recommendedName>
    <domain>
        <recommendedName>
            <fullName>Indole-3-glycerol phosphate synthase</fullName>
            <shortName>IGPS</shortName>
            <ecNumber>4.1.1.48</ecNumber>
        </recommendedName>
    </domain>
    <domain>
        <recommendedName>
            <fullName>N-(5'-phospho-ribosyl)anthranilate isomerase</fullName>
            <shortName>PRAI</shortName>
            <ecNumber>5.3.1.24</ecNumber>
        </recommendedName>
    </domain>
</protein>
<sequence length="452" mass="50678">MPSVLENILKDKLLEVAVLKKNHALPINIAPSDRDFKKALLEKKTSFILEYKKASPSKGLIRKDFDLLEITKTYEKFASCVSVLADSKYFLGSYENIKIVSQHSTKPILCKDFIIDAFQIKLARVMGSNAVLLMLSVLDDKNYLELFNLAKSLNMSVLTEVSNQQEIERLLKLQYDIIGINNRDLHTLKTDIFHTLELRPLLPKDAIIISESGIYSHAQIKALAPCVNGFLVGSSLMKEKDLKKACIKLILGENKVCGLTRIKDAKAVYKNHFIYGGLIFEKSSPRYIKPKEALKITKAVKKLDFVGVFVKDKIKKIAKIAKKLDLKAVQLYGYSQKEIAQLKKSLPKTCAIWQVVSVADSKDLAPKTKEASLILYDTKGDKMGGNGVSFDWEILENAKTPFMLAGGLNLDNIQKALKIKALGLDFNSGLEISPGIKNKDKIKQLARILREY</sequence>
<feature type="chain" id="PRO_0000154281" description="Tryptophan biosynthesis protein TrpCF">
    <location>
        <begin position="1"/>
        <end position="452"/>
    </location>
</feature>
<feature type="region of interest" description="Indole-3-glycerol phosphate synthase">
    <location>
        <begin position="1"/>
        <end position="253"/>
    </location>
</feature>
<feature type="region of interest" description="N-(5'-phosphoribosyl)anthranilate isomerase">
    <location>
        <begin position="254"/>
        <end position="448"/>
    </location>
</feature>
<keyword id="KW-0028">Amino-acid biosynthesis</keyword>
<keyword id="KW-0057">Aromatic amino acid biosynthesis</keyword>
<keyword id="KW-0210">Decarboxylase</keyword>
<keyword id="KW-0413">Isomerase</keyword>
<keyword id="KW-0456">Lyase</keyword>
<keyword id="KW-0511">Multifunctional enzyme</keyword>
<keyword id="KW-0822">Tryptophan biosynthesis</keyword>
<dbReference type="EC" id="4.1.1.48"/>
<dbReference type="EC" id="5.3.1.24"/>
<dbReference type="EMBL" id="AE001439">
    <property type="protein sequence ID" value="AAD06779.1"/>
    <property type="molecule type" value="Genomic_DNA"/>
</dbReference>
<dbReference type="PIR" id="D71836">
    <property type="entry name" value="D71836"/>
</dbReference>
<dbReference type="RefSeq" id="WP_001141390.1">
    <property type="nucleotide sequence ID" value="NC_000921.1"/>
</dbReference>
<dbReference type="SMR" id="Q9ZJU8"/>
<dbReference type="KEGG" id="hpj:jhp_1200"/>
<dbReference type="PATRIC" id="fig|85963.30.peg.1372"/>
<dbReference type="eggNOG" id="COG0134">
    <property type="taxonomic scope" value="Bacteria"/>
</dbReference>
<dbReference type="eggNOG" id="COG0135">
    <property type="taxonomic scope" value="Bacteria"/>
</dbReference>
<dbReference type="UniPathway" id="UPA00035">
    <property type="reaction ID" value="UER00042"/>
</dbReference>
<dbReference type="UniPathway" id="UPA00035">
    <property type="reaction ID" value="UER00043"/>
</dbReference>
<dbReference type="Proteomes" id="UP000000804">
    <property type="component" value="Chromosome"/>
</dbReference>
<dbReference type="GO" id="GO:0004425">
    <property type="term" value="F:indole-3-glycerol-phosphate synthase activity"/>
    <property type="evidence" value="ECO:0007669"/>
    <property type="project" value="UniProtKB-UniRule"/>
</dbReference>
<dbReference type="GO" id="GO:0004640">
    <property type="term" value="F:phosphoribosylanthranilate isomerase activity"/>
    <property type="evidence" value="ECO:0007669"/>
    <property type="project" value="UniProtKB-UniRule"/>
</dbReference>
<dbReference type="GO" id="GO:0000162">
    <property type="term" value="P:L-tryptophan biosynthetic process"/>
    <property type="evidence" value="ECO:0007669"/>
    <property type="project" value="UniProtKB-UniRule"/>
</dbReference>
<dbReference type="CDD" id="cd00331">
    <property type="entry name" value="IGPS"/>
    <property type="match status" value="1"/>
</dbReference>
<dbReference type="CDD" id="cd00405">
    <property type="entry name" value="PRAI"/>
    <property type="match status" value="1"/>
</dbReference>
<dbReference type="FunFam" id="3.20.20.70:FF:000024">
    <property type="entry name" value="Indole-3-glycerol phosphate synthase"/>
    <property type="match status" value="1"/>
</dbReference>
<dbReference type="Gene3D" id="3.20.20.70">
    <property type="entry name" value="Aldolase class I"/>
    <property type="match status" value="2"/>
</dbReference>
<dbReference type="HAMAP" id="MF_00134_B">
    <property type="entry name" value="IGPS_B"/>
    <property type="match status" value="1"/>
</dbReference>
<dbReference type="HAMAP" id="MF_00135">
    <property type="entry name" value="PRAI"/>
    <property type="match status" value="1"/>
</dbReference>
<dbReference type="InterPro" id="IPR013785">
    <property type="entry name" value="Aldolase_TIM"/>
</dbReference>
<dbReference type="InterPro" id="IPR045186">
    <property type="entry name" value="Indole-3-glycerol_P_synth"/>
</dbReference>
<dbReference type="InterPro" id="IPR013798">
    <property type="entry name" value="Indole-3-glycerol_P_synth_dom"/>
</dbReference>
<dbReference type="InterPro" id="IPR001468">
    <property type="entry name" value="Indole-3-GlycerolPSynthase_CS"/>
</dbReference>
<dbReference type="InterPro" id="IPR001240">
    <property type="entry name" value="PRAI_dom"/>
</dbReference>
<dbReference type="InterPro" id="IPR011060">
    <property type="entry name" value="RibuloseP-bd_barrel"/>
</dbReference>
<dbReference type="NCBIfam" id="NF006945">
    <property type="entry name" value="PRK09427.1"/>
    <property type="match status" value="1"/>
</dbReference>
<dbReference type="PANTHER" id="PTHR22854:SF2">
    <property type="entry name" value="INDOLE-3-GLYCEROL-PHOSPHATE SYNTHASE"/>
    <property type="match status" value="1"/>
</dbReference>
<dbReference type="PANTHER" id="PTHR22854">
    <property type="entry name" value="TRYPTOPHAN BIOSYNTHESIS PROTEIN"/>
    <property type="match status" value="1"/>
</dbReference>
<dbReference type="Pfam" id="PF00218">
    <property type="entry name" value="IGPS"/>
    <property type="match status" value="1"/>
</dbReference>
<dbReference type="Pfam" id="PF00697">
    <property type="entry name" value="PRAI"/>
    <property type="match status" value="1"/>
</dbReference>
<dbReference type="SUPFAM" id="SSF51366">
    <property type="entry name" value="Ribulose-phoshate binding barrel"/>
    <property type="match status" value="2"/>
</dbReference>
<dbReference type="PROSITE" id="PS00614">
    <property type="entry name" value="IGPS"/>
    <property type="match status" value="1"/>
</dbReference>
<organism>
    <name type="scientific">Helicobacter pylori (strain J99 / ATCC 700824)</name>
    <name type="common">Campylobacter pylori J99</name>
    <dbReference type="NCBI Taxonomy" id="85963"/>
    <lineage>
        <taxon>Bacteria</taxon>
        <taxon>Pseudomonadati</taxon>
        <taxon>Campylobacterota</taxon>
        <taxon>Epsilonproteobacteria</taxon>
        <taxon>Campylobacterales</taxon>
        <taxon>Helicobacteraceae</taxon>
        <taxon>Helicobacter</taxon>
    </lineage>
</organism>
<comment type="function">
    <text evidence="1">Bifunctional enzyme that catalyzes two sequential steps of tryptophan biosynthetic pathway. The first reaction is catalyzed by the isomerase, coded by the TrpF domain; the second reaction is catalyzed by the synthase, coded by the TrpC domain (By similarity).</text>
</comment>
<comment type="catalytic activity">
    <reaction>
        <text>N-(5-phospho-beta-D-ribosyl)anthranilate = 1-(2-carboxyphenylamino)-1-deoxy-D-ribulose 5-phosphate</text>
        <dbReference type="Rhea" id="RHEA:21540"/>
        <dbReference type="ChEBI" id="CHEBI:18277"/>
        <dbReference type="ChEBI" id="CHEBI:58613"/>
        <dbReference type="EC" id="5.3.1.24"/>
    </reaction>
</comment>
<comment type="catalytic activity">
    <reaction>
        <text>1-(2-carboxyphenylamino)-1-deoxy-D-ribulose 5-phosphate + H(+) = (1S,2R)-1-C-(indol-3-yl)glycerol 3-phosphate + CO2 + H2O</text>
        <dbReference type="Rhea" id="RHEA:23476"/>
        <dbReference type="ChEBI" id="CHEBI:15377"/>
        <dbReference type="ChEBI" id="CHEBI:15378"/>
        <dbReference type="ChEBI" id="CHEBI:16526"/>
        <dbReference type="ChEBI" id="CHEBI:58613"/>
        <dbReference type="ChEBI" id="CHEBI:58866"/>
        <dbReference type="EC" id="4.1.1.48"/>
    </reaction>
</comment>
<comment type="pathway">
    <text>Amino-acid biosynthesis; L-tryptophan biosynthesis; L-tryptophan from chorismate: step 3/5.</text>
</comment>
<comment type="pathway">
    <text>Amino-acid biosynthesis; L-tryptophan biosynthesis; L-tryptophan from chorismate: step 4/5.</text>
</comment>
<comment type="similarity">
    <text evidence="2">In the N-terminal section; belongs to the TrpC family.</text>
</comment>
<comment type="similarity">
    <text evidence="2">In the C-terminal section; belongs to the TrpF family.</text>
</comment>